<gene>
    <name evidence="1" type="primary">scdA</name>
    <name type="ordered locus">SE_0439</name>
</gene>
<proteinExistence type="inferred from homology"/>
<evidence type="ECO:0000255" key="1">
    <source>
        <dbReference type="HAMAP-Rule" id="MF_01156"/>
    </source>
</evidence>
<dbReference type="EMBL" id="AE015929">
    <property type="protein sequence ID" value="AAO04036.1"/>
    <property type="molecule type" value="Genomic_DNA"/>
</dbReference>
<dbReference type="RefSeq" id="NP_763994.1">
    <property type="nucleotide sequence ID" value="NC_004461.1"/>
</dbReference>
<dbReference type="RefSeq" id="WP_001832101.1">
    <property type="nucleotide sequence ID" value="NZ_WBME01000018.1"/>
</dbReference>
<dbReference type="SMR" id="Q8CQ32"/>
<dbReference type="GeneID" id="50019405"/>
<dbReference type="KEGG" id="sep:SE_0439"/>
<dbReference type="PATRIC" id="fig|176280.10.peg.413"/>
<dbReference type="eggNOG" id="COG2846">
    <property type="taxonomic scope" value="Bacteria"/>
</dbReference>
<dbReference type="HOGENOM" id="CLU_076075_0_1_9"/>
<dbReference type="OrthoDB" id="9797132at2"/>
<dbReference type="Proteomes" id="UP000001411">
    <property type="component" value="Chromosome"/>
</dbReference>
<dbReference type="GO" id="GO:0005737">
    <property type="term" value="C:cytoplasm"/>
    <property type="evidence" value="ECO:0007669"/>
    <property type="project" value="UniProtKB-SubCell"/>
</dbReference>
<dbReference type="GO" id="GO:0046872">
    <property type="term" value="F:metal ion binding"/>
    <property type="evidence" value="ECO:0007669"/>
    <property type="project" value="UniProtKB-KW"/>
</dbReference>
<dbReference type="GO" id="GO:0030091">
    <property type="term" value="P:protein repair"/>
    <property type="evidence" value="ECO:0007669"/>
    <property type="project" value="UniProtKB-UniRule"/>
</dbReference>
<dbReference type="GO" id="GO:0051409">
    <property type="term" value="P:response to nitrosative stress"/>
    <property type="evidence" value="ECO:0007669"/>
    <property type="project" value="UniProtKB-UniRule"/>
</dbReference>
<dbReference type="GO" id="GO:0006979">
    <property type="term" value="P:response to oxidative stress"/>
    <property type="evidence" value="ECO:0007669"/>
    <property type="project" value="UniProtKB-UniRule"/>
</dbReference>
<dbReference type="Gene3D" id="1.20.120.520">
    <property type="entry name" value="nmb1532 protein domain like"/>
    <property type="match status" value="1"/>
</dbReference>
<dbReference type="Gene3D" id="1.10.3910.10">
    <property type="entry name" value="SP0561-like"/>
    <property type="match status" value="1"/>
</dbReference>
<dbReference type="HAMAP" id="MF_01156">
    <property type="entry name" value="RIC_ScdA"/>
    <property type="match status" value="1"/>
</dbReference>
<dbReference type="InterPro" id="IPR012312">
    <property type="entry name" value="Hemerythrin-like"/>
</dbReference>
<dbReference type="InterPro" id="IPR019903">
    <property type="entry name" value="RIC_family"/>
</dbReference>
<dbReference type="InterPro" id="IPR023551">
    <property type="entry name" value="ScdA"/>
</dbReference>
<dbReference type="InterPro" id="IPR038062">
    <property type="entry name" value="ScdA-like_N_sf"/>
</dbReference>
<dbReference type="NCBIfam" id="TIGR03652">
    <property type="entry name" value="FeS_repair_RIC"/>
    <property type="match status" value="1"/>
</dbReference>
<dbReference type="NCBIfam" id="NF009777">
    <property type="entry name" value="PRK13276.1"/>
    <property type="match status" value="1"/>
</dbReference>
<dbReference type="PANTHER" id="PTHR36438">
    <property type="entry name" value="IRON-SULFUR CLUSTER REPAIR PROTEIN YTFE"/>
    <property type="match status" value="1"/>
</dbReference>
<dbReference type="PANTHER" id="PTHR36438:SF1">
    <property type="entry name" value="IRON-SULFUR CLUSTER REPAIR PROTEIN YTFE"/>
    <property type="match status" value="1"/>
</dbReference>
<dbReference type="Pfam" id="PF01814">
    <property type="entry name" value="Hemerythrin"/>
    <property type="match status" value="1"/>
</dbReference>
<dbReference type="Pfam" id="PF04405">
    <property type="entry name" value="ScdA_N"/>
    <property type="match status" value="1"/>
</dbReference>
<dbReference type="SUPFAM" id="SSF140683">
    <property type="entry name" value="SP0561-like"/>
    <property type="match status" value="1"/>
</dbReference>
<comment type="function">
    <text evidence="1">Di-iron-containing protein involved in the repair of iron-sulfur clusters damaged by oxidative and nitrosative stress conditions.</text>
</comment>
<comment type="subunit">
    <text evidence="1">Homodimer.</text>
</comment>
<comment type="subcellular location">
    <subcellularLocation>
        <location evidence="1">Cytoplasm</location>
    </subcellularLocation>
</comment>
<comment type="similarity">
    <text evidence="1">Belongs to the RIC family. ScdA subfamily.</text>
</comment>
<reference key="1">
    <citation type="journal article" date="2003" name="Mol. Microbiol.">
        <title>Genome-based analysis of virulence genes in a non-biofilm-forming Staphylococcus epidermidis strain (ATCC 12228).</title>
        <authorList>
            <person name="Zhang Y.-Q."/>
            <person name="Ren S.-X."/>
            <person name="Li H.-L."/>
            <person name="Wang Y.-X."/>
            <person name="Fu G."/>
            <person name="Yang J."/>
            <person name="Qin Z.-Q."/>
            <person name="Miao Y.-G."/>
            <person name="Wang W.-Y."/>
            <person name="Chen R.-S."/>
            <person name="Shen Y."/>
            <person name="Chen Z."/>
            <person name="Yuan Z.-H."/>
            <person name="Zhao G.-P."/>
            <person name="Qu D."/>
            <person name="Danchin A."/>
            <person name="Wen Y.-M."/>
        </authorList>
    </citation>
    <scope>NUCLEOTIDE SEQUENCE [LARGE SCALE GENOMIC DNA]</scope>
    <source>
        <strain>ATCC 12228 / FDA PCI 1200</strain>
    </source>
</reference>
<name>SCDA_STAES</name>
<sequence length="224" mass="25936">MITKEDIVADVVTDYPKSADIFRNAGIDFCCGGQESIASAVNHKPNIDLNSLLNKLNHIDNTEGNSTINPKFLNVESLIQYIQSAYHETLKEEFKNLTPYMTKLAKVHGPSHPYLLKLQDLYREFRDSMLDHIRKEDEEDFPKLIQYSQGQDVQNIKIILEDLINDHEDTGQLLNVMNQLTSDYQTPEEACGTWKLVYQRLQNIERQTHQHVHLENHVLFKKVS</sequence>
<feature type="chain" id="PRO_0000220342" description="Iron-sulfur cluster repair protein ScdA">
    <location>
        <begin position="1"/>
        <end position="224"/>
    </location>
</feature>
<accession>Q8CQ32</accession>
<protein>
    <recommendedName>
        <fullName evidence="1">Iron-sulfur cluster repair protein ScdA</fullName>
    </recommendedName>
</protein>
<organism>
    <name type="scientific">Staphylococcus epidermidis (strain ATCC 12228 / FDA PCI 1200)</name>
    <dbReference type="NCBI Taxonomy" id="176280"/>
    <lineage>
        <taxon>Bacteria</taxon>
        <taxon>Bacillati</taxon>
        <taxon>Bacillota</taxon>
        <taxon>Bacilli</taxon>
        <taxon>Bacillales</taxon>
        <taxon>Staphylococcaceae</taxon>
        <taxon>Staphylococcus</taxon>
    </lineage>
</organism>
<keyword id="KW-0963">Cytoplasm</keyword>
<keyword id="KW-0408">Iron</keyword>
<keyword id="KW-0479">Metal-binding</keyword>
<keyword id="KW-0346">Stress response</keyword>